<evidence type="ECO:0000255" key="1">
    <source>
        <dbReference type="HAMAP-Rule" id="MF_01227"/>
    </source>
</evidence>
<feature type="chain" id="PRO_0000266169" description="CTP synthase">
    <location>
        <begin position="1"/>
        <end position="538"/>
    </location>
</feature>
<feature type="domain" description="Glutamine amidotransferase type-1" evidence="1">
    <location>
        <begin position="291"/>
        <end position="538"/>
    </location>
</feature>
<feature type="region of interest" description="Amidoligase domain" evidence="1">
    <location>
        <begin position="1"/>
        <end position="265"/>
    </location>
</feature>
<feature type="active site" description="Nucleophile; for glutamine hydrolysis" evidence="1">
    <location>
        <position position="380"/>
    </location>
</feature>
<feature type="active site" evidence="1">
    <location>
        <position position="513"/>
    </location>
</feature>
<feature type="active site" evidence="1">
    <location>
        <position position="515"/>
    </location>
</feature>
<feature type="binding site" evidence="1">
    <location>
        <position position="13"/>
    </location>
    <ligand>
        <name>CTP</name>
        <dbReference type="ChEBI" id="CHEBI:37563"/>
        <note>allosteric inhibitor</note>
    </ligand>
</feature>
<feature type="binding site" evidence="1">
    <location>
        <position position="13"/>
    </location>
    <ligand>
        <name>UTP</name>
        <dbReference type="ChEBI" id="CHEBI:46398"/>
    </ligand>
</feature>
<feature type="binding site" evidence="1">
    <location>
        <begin position="14"/>
        <end position="19"/>
    </location>
    <ligand>
        <name>ATP</name>
        <dbReference type="ChEBI" id="CHEBI:30616"/>
    </ligand>
</feature>
<feature type="binding site" evidence="1">
    <location>
        <position position="71"/>
    </location>
    <ligand>
        <name>ATP</name>
        <dbReference type="ChEBI" id="CHEBI:30616"/>
    </ligand>
</feature>
<feature type="binding site" evidence="1">
    <location>
        <position position="71"/>
    </location>
    <ligand>
        <name>Mg(2+)</name>
        <dbReference type="ChEBI" id="CHEBI:18420"/>
    </ligand>
</feature>
<feature type="binding site" evidence="1">
    <location>
        <position position="139"/>
    </location>
    <ligand>
        <name>Mg(2+)</name>
        <dbReference type="ChEBI" id="CHEBI:18420"/>
    </ligand>
</feature>
<feature type="binding site" evidence="1">
    <location>
        <begin position="146"/>
        <end position="148"/>
    </location>
    <ligand>
        <name>CTP</name>
        <dbReference type="ChEBI" id="CHEBI:37563"/>
        <note>allosteric inhibitor</note>
    </ligand>
</feature>
<feature type="binding site" evidence="1">
    <location>
        <begin position="186"/>
        <end position="191"/>
    </location>
    <ligand>
        <name>CTP</name>
        <dbReference type="ChEBI" id="CHEBI:37563"/>
        <note>allosteric inhibitor</note>
    </ligand>
</feature>
<feature type="binding site" evidence="1">
    <location>
        <begin position="186"/>
        <end position="191"/>
    </location>
    <ligand>
        <name>UTP</name>
        <dbReference type="ChEBI" id="CHEBI:46398"/>
    </ligand>
</feature>
<feature type="binding site" evidence="1">
    <location>
        <position position="222"/>
    </location>
    <ligand>
        <name>CTP</name>
        <dbReference type="ChEBI" id="CHEBI:37563"/>
        <note>allosteric inhibitor</note>
    </ligand>
</feature>
<feature type="binding site" evidence="1">
    <location>
        <position position="222"/>
    </location>
    <ligand>
        <name>UTP</name>
        <dbReference type="ChEBI" id="CHEBI:46398"/>
    </ligand>
</feature>
<feature type="binding site" evidence="1">
    <location>
        <position position="353"/>
    </location>
    <ligand>
        <name>L-glutamine</name>
        <dbReference type="ChEBI" id="CHEBI:58359"/>
    </ligand>
</feature>
<feature type="binding site" evidence="1">
    <location>
        <begin position="381"/>
        <end position="384"/>
    </location>
    <ligand>
        <name>L-glutamine</name>
        <dbReference type="ChEBI" id="CHEBI:58359"/>
    </ligand>
</feature>
<feature type="binding site" evidence="1">
    <location>
        <position position="404"/>
    </location>
    <ligand>
        <name>L-glutamine</name>
        <dbReference type="ChEBI" id="CHEBI:58359"/>
    </ligand>
</feature>
<feature type="binding site" evidence="1">
    <location>
        <position position="468"/>
    </location>
    <ligand>
        <name>L-glutamine</name>
        <dbReference type="ChEBI" id="CHEBI:58359"/>
    </ligand>
</feature>
<protein>
    <recommendedName>
        <fullName evidence="1">CTP synthase</fullName>
        <ecNumber evidence="1">6.3.4.2</ecNumber>
    </recommendedName>
    <alternativeName>
        <fullName evidence="1">Cytidine 5'-triphosphate synthase</fullName>
    </alternativeName>
    <alternativeName>
        <fullName evidence="1">Cytidine triphosphate synthetase</fullName>
        <shortName evidence="1">CTP synthetase</shortName>
        <shortName evidence="1">CTPS</shortName>
    </alternativeName>
    <alternativeName>
        <fullName evidence="1">UTP--ammonia ligase</fullName>
    </alternativeName>
</protein>
<sequence length="538" mass="60881">MARYIFVTGGVVSSLGKGLSSASLAYLLQSRGYKVRIRKLDPYLNVDPGTMSPFQHGEVFVTDDGAETDLDLGHYERFSGVSAKKSDNITTGKIYSDVLRKERKGEYLGKTVQVIPHITDRIKQFIKHDSSKEDFVICEIGGIVGDIESLPFVEAIRQFANDVGKKNALFIHLTLVPYLKASDEIKTKPTQHSVKELRSIGIQPDIIICRSERPIPLDHRKKISLFCNVDIKNVIETVDVRTIYEAPMSFFKEKLDLQVLNYFKLKSKKPANLNPWKKITKIILHNKKQVNIAIIGKYVELKDAYKSLDEALTHGGIDNKVKVNLVRIDSEKLKISEIKKKLKNISGILIPGGFGKRGTDGKIEAIKHARLNKIPFLGICYGMQMAIIEFARNQLNLKNATSSEFDKKGLPIIGLINEWTKDGKKIKGTDKDLGGTMRLGSYDAKLKDNSKISKIYKSKLIKERHRHRYEVNIAFKDKFEKKGMIFSGLSPDNKLPEIIELKNHPWFIGVQFHPEFKSRPLAPHPLFSSFIKAAKNHK</sequence>
<comment type="function">
    <text evidence="1">Catalyzes the ATP-dependent amination of UTP to CTP with either L-glutamine or ammonia as the source of nitrogen. Regulates intracellular CTP levels through interactions with the four ribonucleotide triphosphates.</text>
</comment>
<comment type="catalytic activity">
    <reaction evidence="1">
        <text>UTP + L-glutamine + ATP + H2O = CTP + L-glutamate + ADP + phosphate + 2 H(+)</text>
        <dbReference type="Rhea" id="RHEA:26426"/>
        <dbReference type="ChEBI" id="CHEBI:15377"/>
        <dbReference type="ChEBI" id="CHEBI:15378"/>
        <dbReference type="ChEBI" id="CHEBI:29985"/>
        <dbReference type="ChEBI" id="CHEBI:30616"/>
        <dbReference type="ChEBI" id="CHEBI:37563"/>
        <dbReference type="ChEBI" id="CHEBI:43474"/>
        <dbReference type="ChEBI" id="CHEBI:46398"/>
        <dbReference type="ChEBI" id="CHEBI:58359"/>
        <dbReference type="ChEBI" id="CHEBI:456216"/>
        <dbReference type="EC" id="6.3.4.2"/>
    </reaction>
</comment>
<comment type="catalytic activity">
    <reaction evidence="1">
        <text>L-glutamine + H2O = L-glutamate + NH4(+)</text>
        <dbReference type="Rhea" id="RHEA:15889"/>
        <dbReference type="ChEBI" id="CHEBI:15377"/>
        <dbReference type="ChEBI" id="CHEBI:28938"/>
        <dbReference type="ChEBI" id="CHEBI:29985"/>
        <dbReference type="ChEBI" id="CHEBI:58359"/>
    </reaction>
</comment>
<comment type="catalytic activity">
    <reaction evidence="1">
        <text>UTP + NH4(+) + ATP = CTP + ADP + phosphate + 2 H(+)</text>
        <dbReference type="Rhea" id="RHEA:16597"/>
        <dbReference type="ChEBI" id="CHEBI:15378"/>
        <dbReference type="ChEBI" id="CHEBI:28938"/>
        <dbReference type="ChEBI" id="CHEBI:30616"/>
        <dbReference type="ChEBI" id="CHEBI:37563"/>
        <dbReference type="ChEBI" id="CHEBI:43474"/>
        <dbReference type="ChEBI" id="CHEBI:46398"/>
        <dbReference type="ChEBI" id="CHEBI:456216"/>
    </reaction>
</comment>
<comment type="activity regulation">
    <text evidence="1">Allosterically activated by GTP, when glutamine is the substrate; GTP has no effect on the reaction when ammonia is the substrate. The allosteric effector GTP functions by stabilizing the protein conformation that binds the tetrahedral intermediate(s) formed during glutamine hydrolysis. Inhibited by the product CTP, via allosteric rather than competitive inhibition.</text>
</comment>
<comment type="pathway">
    <text evidence="1">Pyrimidine metabolism; CTP biosynthesis via de novo pathway; CTP from UDP: step 2/2.</text>
</comment>
<comment type="subunit">
    <text evidence="1">Homotetramer.</text>
</comment>
<comment type="miscellaneous">
    <text evidence="1">CTPSs have evolved a hybrid strategy for distinguishing between UTP and CTP. The overlapping regions of the product feedback inhibitory and substrate sites recognize a common feature in both compounds, the triphosphate moiety. To differentiate isosteric substrate and product pyrimidine rings, an additional pocket far from the expected kinase/ligase catalytic site, specifically recognizes the cytosine and ribose portions of the product inhibitor.</text>
</comment>
<comment type="similarity">
    <text evidence="1">Belongs to the CTP synthase family.</text>
</comment>
<reference key="1">
    <citation type="journal article" date="2005" name="Science">
        <title>Genome streamlining in a cosmopolitan oceanic bacterium.</title>
        <authorList>
            <person name="Giovannoni S.J."/>
            <person name="Tripp H.J."/>
            <person name="Givan S."/>
            <person name="Podar M."/>
            <person name="Vergin K.L."/>
            <person name="Baptista D."/>
            <person name="Bibbs L."/>
            <person name="Eads J."/>
            <person name="Richardson T.H."/>
            <person name="Noordewier M."/>
            <person name="Rappe M.S."/>
            <person name="Short J.M."/>
            <person name="Carrington J.C."/>
            <person name="Mathur E.J."/>
        </authorList>
    </citation>
    <scope>NUCLEOTIDE SEQUENCE [LARGE SCALE GENOMIC DNA]</scope>
    <source>
        <strain>HTCC1062</strain>
    </source>
</reference>
<accession>Q4FM39</accession>
<keyword id="KW-0067">ATP-binding</keyword>
<keyword id="KW-0315">Glutamine amidotransferase</keyword>
<keyword id="KW-0436">Ligase</keyword>
<keyword id="KW-0460">Magnesium</keyword>
<keyword id="KW-0479">Metal-binding</keyword>
<keyword id="KW-0547">Nucleotide-binding</keyword>
<keyword id="KW-0665">Pyrimidine biosynthesis</keyword>
<keyword id="KW-1185">Reference proteome</keyword>
<name>PYRG_PELUB</name>
<proteinExistence type="inferred from homology"/>
<dbReference type="EC" id="6.3.4.2" evidence="1"/>
<dbReference type="EMBL" id="CP000084">
    <property type="protein sequence ID" value="AAZ21749.1"/>
    <property type="molecule type" value="Genomic_DNA"/>
</dbReference>
<dbReference type="RefSeq" id="WP_011282053.1">
    <property type="nucleotide sequence ID" value="NC_007205.1"/>
</dbReference>
<dbReference type="SMR" id="Q4FM39"/>
<dbReference type="STRING" id="335992.SAR11_0937"/>
<dbReference type="GeneID" id="66295428"/>
<dbReference type="KEGG" id="pub:SAR11_0937"/>
<dbReference type="eggNOG" id="COG0504">
    <property type="taxonomic scope" value="Bacteria"/>
</dbReference>
<dbReference type="HOGENOM" id="CLU_011675_5_0_5"/>
<dbReference type="OrthoDB" id="9801107at2"/>
<dbReference type="UniPathway" id="UPA00159">
    <property type="reaction ID" value="UER00277"/>
</dbReference>
<dbReference type="Proteomes" id="UP000002528">
    <property type="component" value="Chromosome"/>
</dbReference>
<dbReference type="GO" id="GO:0005829">
    <property type="term" value="C:cytosol"/>
    <property type="evidence" value="ECO:0007669"/>
    <property type="project" value="TreeGrafter"/>
</dbReference>
<dbReference type="GO" id="GO:0005524">
    <property type="term" value="F:ATP binding"/>
    <property type="evidence" value="ECO:0007669"/>
    <property type="project" value="UniProtKB-KW"/>
</dbReference>
<dbReference type="GO" id="GO:0003883">
    <property type="term" value="F:CTP synthase activity"/>
    <property type="evidence" value="ECO:0007669"/>
    <property type="project" value="UniProtKB-UniRule"/>
</dbReference>
<dbReference type="GO" id="GO:0004359">
    <property type="term" value="F:glutaminase activity"/>
    <property type="evidence" value="ECO:0007669"/>
    <property type="project" value="RHEA"/>
</dbReference>
<dbReference type="GO" id="GO:0042802">
    <property type="term" value="F:identical protein binding"/>
    <property type="evidence" value="ECO:0007669"/>
    <property type="project" value="TreeGrafter"/>
</dbReference>
<dbReference type="GO" id="GO:0046872">
    <property type="term" value="F:metal ion binding"/>
    <property type="evidence" value="ECO:0007669"/>
    <property type="project" value="UniProtKB-KW"/>
</dbReference>
<dbReference type="GO" id="GO:0044210">
    <property type="term" value="P:'de novo' CTP biosynthetic process"/>
    <property type="evidence" value="ECO:0007669"/>
    <property type="project" value="UniProtKB-UniRule"/>
</dbReference>
<dbReference type="GO" id="GO:0019856">
    <property type="term" value="P:pyrimidine nucleobase biosynthetic process"/>
    <property type="evidence" value="ECO:0007669"/>
    <property type="project" value="TreeGrafter"/>
</dbReference>
<dbReference type="CDD" id="cd03113">
    <property type="entry name" value="CTPS_N"/>
    <property type="match status" value="1"/>
</dbReference>
<dbReference type="CDD" id="cd01746">
    <property type="entry name" value="GATase1_CTP_Synthase"/>
    <property type="match status" value="1"/>
</dbReference>
<dbReference type="FunFam" id="3.40.50.300:FF:000009">
    <property type="entry name" value="CTP synthase"/>
    <property type="match status" value="1"/>
</dbReference>
<dbReference type="FunFam" id="3.40.50.880:FF:000002">
    <property type="entry name" value="CTP synthase"/>
    <property type="match status" value="1"/>
</dbReference>
<dbReference type="Gene3D" id="3.40.50.880">
    <property type="match status" value="1"/>
</dbReference>
<dbReference type="Gene3D" id="3.40.50.300">
    <property type="entry name" value="P-loop containing nucleotide triphosphate hydrolases"/>
    <property type="match status" value="1"/>
</dbReference>
<dbReference type="HAMAP" id="MF_01227">
    <property type="entry name" value="PyrG"/>
    <property type="match status" value="1"/>
</dbReference>
<dbReference type="InterPro" id="IPR029062">
    <property type="entry name" value="Class_I_gatase-like"/>
</dbReference>
<dbReference type="InterPro" id="IPR004468">
    <property type="entry name" value="CTP_synthase"/>
</dbReference>
<dbReference type="InterPro" id="IPR017456">
    <property type="entry name" value="CTP_synthase_N"/>
</dbReference>
<dbReference type="InterPro" id="IPR017926">
    <property type="entry name" value="GATASE"/>
</dbReference>
<dbReference type="InterPro" id="IPR033828">
    <property type="entry name" value="GATase1_CTP_Synthase"/>
</dbReference>
<dbReference type="InterPro" id="IPR027417">
    <property type="entry name" value="P-loop_NTPase"/>
</dbReference>
<dbReference type="NCBIfam" id="NF003792">
    <property type="entry name" value="PRK05380.1"/>
    <property type="match status" value="1"/>
</dbReference>
<dbReference type="NCBIfam" id="TIGR00337">
    <property type="entry name" value="PyrG"/>
    <property type="match status" value="1"/>
</dbReference>
<dbReference type="PANTHER" id="PTHR11550">
    <property type="entry name" value="CTP SYNTHASE"/>
    <property type="match status" value="1"/>
</dbReference>
<dbReference type="PANTHER" id="PTHR11550:SF0">
    <property type="entry name" value="CTP SYNTHASE-RELATED"/>
    <property type="match status" value="1"/>
</dbReference>
<dbReference type="Pfam" id="PF06418">
    <property type="entry name" value="CTP_synth_N"/>
    <property type="match status" value="1"/>
</dbReference>
<dbReference type="Pfam" id="PF00117">
    <property type="entry name" value="GATase"/>
    <property type="match status" value="1"/>
</dbReference>
<dbReference type="SUPFAM" id="SSF52317">
    <property type="entry name" value="Class I glutamine amidotransferase-like"/>
    <property type="match status" value="1"/>
</dbReference>
<dbReference type="SUPFAM" id="SSF52540">
    <property type="entry name" value="P-loop containing nucleoside triphosphate hydrolases"/>
    <property type="match status" value="1"/>
</dbReference>
<dbReference type="PROSITE" id="PS51273">
    <property type="entry name" value="GATASE_TYPE_1"/>
    <property type="match status" value="1"/>
</dbReference>
<organism>
    <name type="scientific">Pelagibacter ubique (strain HTCC1062)</name>
    <dbReference type="NCBI Taxonomy" id="335992"/>
    <lineage>
        <taxon>Bacteria</taxon>
        <taxon>Pseudomonadati</taxon>
        <taxon>Pseudomonadota</taxon>
        <taxon>Alphaproteobacteria</taxon>
        <taxon>Candidatus Pelagibacterales</taxon>
        <taxon>Candidatus Pelagibacteraceae</taxon>
        <taxon>Candidatus Pelagibacter</taxon>
    </lineage>
</organism>
<gene>
    <name evidence="1" type="primary">pyrG</name>
    <name type="ordered locus">SAR11_0937</name>
</gene>